<feature type="chain" id="PRO_1000200536" description="UvrABC system protein B">
    <location>
        <begin position="1"/>
        <end position="662"/>
    </location>
</feature>
<feature type="domain" description="Helicase ATP-binding" evidence="1">
    <location>
        <begin position="25"/>
        <end position="182"/>
    </location>
</feature>
<feature type="domain" description="Helicase C-terminal" evidence="1">
    <location>
        <begin position="429"/>
        <end position="595"/>
    </location>
</feature>
<feature type="domain" description="UVR" evidence="1">
    <location>
        <begin position="622"/>
        <end position="657"/>
    </location>
</feature>
<feature type="short sequence motif" description="Beta-hairpin">
    <location>
        <begin position="91"/>
        <end position="114"/>
    </location>
</feature>
<feature type="binding site" evidence="1">
    <location>
        <begin position="38"/>
        <end position="45"/>
    </location>
    <ligand>
        <name>ATP</name>
        <dbReference type="ChEBI" id="CHEBI:30616"/>
    </ligand>
</feature>
<name>UVRB_CLOBJ</name>
<sequence length="662" mass="76243">MNQFKVISKFNPTGDQPKAIKSIAKGIEKREKFQTLIGVTGSGKTFTMANIIEKVQKPTLVLAHNKTLAAQLCSEFREFFPNNAVEYFVSYYDYYQPEAYVAQSDTYIEKDASINDEIDKLRHSATSALFERKDVIIVASVSCIYGLGNPEEYKKLTISLREGMEKDRDEIIKKLVEIQYERNDIDFSRGTFRVKGDVLDIFPASSSSKAVRVEFFGDEIDRIKEFDVLTGETITKLKHISIFPASHFATSKDRLEVAIKDIEEELEERVKELVSQDKILEAQRLKQRTNFDIEMMREVGYCTGIENYSRVLDGRAKGTPPQTLLDYFPQDFLLFIDESHVTLPQVKAMQAGDKSRKDSLVEYGFRLPCAYDNRPLTFKEFENKLNQVVFVSATPAKYELEYSTNTAEQVIRPTGLLDPEIIVKPVKGQIDDLYTSIQETIKRGFRILVTTLTKKMAEDLTDYLKEMGVKTRYLHSDIDTIERMKIIHDLRKGEFHVLVGINLLREGLDIPEVALVTILDADKEGFLRSETSLIQTVGRAARNSESKVIMYGDVITKSMEKTIKETNRRRKIQMEYNEEYGIVPKTIIKDIREVIQISDIAEERKEYDNLNEALKSYNNDIDKLIEKYEEEMKEAAQNLQFEKAAHLRDVIYKLKKDKETEL</sequence>
<proteinExistence type="inferred from homology"/>
<accession>C1FMK5</accession>
<protein>
    <recommendedName>
        <fullName evidence="1">UvrABC system protein B</fullName>
        <shortName evidence="1">Protein UvrB</shortName>
    </recommendedName>
    <alternativeName>
        <fullName evidence="1">Excinuclease ABC subunit B</fullName>
    </alternativeName>
</protein>
<evidence type="ECO:0000255" key="1">
    <source>
        <dbReference type="HAMAP-Rule" id="MF_00204"/>
    </source>
</evidence>
<organism>
    <name type="scientific">Clostridium botulinum (strain Kyoto / Type A2)</name>
    <dbReference type="NCBI Taxonomy" id="536232"/>
    <lineage>
        <taxon>Bacteria</taxon>
        <taxon>Bacillati</taxon>
        <taxon>Bacillota</taxon>
        <taxon>Clostridia</taxon>
        <taxon>Eubacteriales</taxon>
        <taxon>Clostridiaceae</taxon>
        <taxon>Clostridium</taxon>
    </lineage>
</organism>
<comment type="function">
    <text evidence="1">The UvrABC repair system catalyzes the recognition and processing of DNA lesions. A damage recognition complex composed of 2 UvrA and 2 UvrB subunits scans DNA for abnormalities. Upon binding of the UvrA(2)B(2) complex to a putative damaged site, the DNA wraps around one UvrB monomer. DNA wrap is dependent on ATP binding by UvrB and probably causes local melting of the DNA helix, facilitating insertion of UvrB beta-hairpin between the DNA strands. Then UvrB probes one DNA strand for the presence of a lesion. If a lesion is found the UvrA subunits dissociate and the UvrB-DNA preincision complex is formed. This complex is subsequently bound by UvrC and the second UvrB is released. If no lesion is found, the DNA wraps around the other UvrB subunit that will check the other stand for damage.</text>
</comment>
<comment type="subunit">
    <text evidence="1">Forms a heterotetramer with UvrA during the search for lesions. Interacts with UvrC in an incision complex.</text>
</comment>
<comment type="subcellular location">
    <subcellularLocation>
        <location evidence="1">Cytoplasm</location>
    </subcellularLocation>
</comment>
<comment type="domain">
    <text evidence="1">The beta-hairpin motif is involved in DNA binding.</text>
</comment>
<comment type="similarity">
    <text evidence="1">Belongs to the UvrB family.</text>
</comment>
<keyword id="KW-0067">ATP-binding</keyword>
<keyword id="KW-0963">Cytoplasm</keyword>
<keyword id="KW-0227">DNA damage</keyword>
<keyword id="KW-0228">DNA excision</keyword>
<keyword id="KW-0234">DNA repair</keyword>
<keyword id="KW-0267">Excision nuclease</keyword>
<keyword id="KW-0347">Helicase</keyword>
<keyword id="KW-0378">Hydrolase</keyword>
<keyword id="KW-0547">Nucleotide-binding</keyword>
<keyword id="KW-0742">SOS response</keyword>
<gene>
    <name evidence="1" type="primary">uvrB</name>
    <name type="ordered locus">CLM_3849</name>
</gene>
<dbReference type="EMBL" id="CP001581">
    <property type="protein sequence ID" value="ACO85279.1"/>
    <property type="molecule type" value="Genomic_DNA"/>
</dbReference>
<dbReference type="RefSeq" id="WP_012704675.1">
    <property type="nucleotide sequence ID" value="NC_012563.1"/>
</dbReference>
<dbReference type="SMR" id="C1FMK5"/>
<dbReference type="KEGG" id="cby:CLM_3849"/>
<dbReference type="eggNOG" id="COG0556">
    <property type="taxonomic scope" value="Bacteria"/>
</dbReference>
<dbReference type="HOGENOM" id="CLU_009621_2_1_9"/>
<dbReference type="Proteomes" id="UP000001374">
    <property type="component" value="Chromosome"/>
</dbReference>
<dbReference type="GO" id="GO:0005737">
    <property type="term" value="C:cytoplasm"/>
    <property type="evidence" value="ECO:0007669"/>
    <property type="project" value="UniProtKB-SubCell"/>
</dbReference>
<dbReference type="GO" id="GO:0009380">
    <property type="term" value="C:excinuclease repair complex"/>
    <property type="evidence" value="ECO:0007669"/>
    <property type="project" value="InterPro"/>
</dbReference>
<dbReference type="GO" id="GO:0005524">
    <property type="term" value="F:ATP binding"/>
    <property type="evidence" value="ECO:0007669"/>
    <property type="project" value="UniProtKB-UniRule"/>
</dbReference>
<dbReference type="GO" id="GO:0016887">
    <property type="term" value="F:ATP hydrolysis activity"/>
    <property type="evidence" value="ECO:0007669"/>
    <property type="project" value="InterPro"/>
</dbReference>
<dbReference type="GO" id="GO:0003677">
    <property type="term" value="F:DNA binding"/>
    <property type="evidence" value="ECO:0007669"/>
    <property type="project" value="UniProtKB-UniRule"/>
</dbReference>
<dbReference type="GO" id="GO:0009381">
    <property type="term" value="F:excinuclease ABC activity"/>
    <property type="evidence" value="ECO:0007669"/>
    <property type="project" value="UniProtKB-UniRule"/>
</dbReference>
<dbReference type="GO" id="GO:0004386">
    <property type="term" value="F:helicase activity"/>
    <property type="evidence" value="ECO:0007669"/>
    <property type="project" value="UniProtKB-KW"/>
</dbReference>
<dbReference type="GO" id="GO:0006289">
    <property type="term" value="P:nucleotide-excision repair"/>
    <property type="evidence" value="ECO:0007669"/>
    <property type="project" value="UniProtKB-UniRule"/>
</dbReference>
<dbReference type="GO" id="GO:0009432">
    <property type="term" value="P:SOS response"/>
    <property type="evidence" value="ECO:0007669"/>
    <property type="project" value="UniProtKB-UniRule"/>
</dbReference>
<dbReference type="CDD" id="cd17916">
    <property type="entry name" value="DEXHc_UvrB"/>
    <property type="match status" value="1"/>
</dbReference>
<dbReference type="CDD" id="cd18790">
    <property type="entry name" value="SF2_C_UvrB"/>
    <property type="match status" value="1"/>
</dbReference>
<dbReference type="Gene3D" id="3.40.50.300">
    <property type="entry name" value="P-loop containing nucleotide triphosphate hydrolases"/>
    <property type="match status" value="3"/>
</dbReference>
<dbReference type="Gene3D" id="4.10.860.10">
    <property type="entry name" value="UVR domain"/>
    <property type="match status" value="1"/>
</dbReference>
<dbReference type="HAMAP" id="MF_00204">
    <property type="entry name" value="UvrB"/>
    <property type="match status" value="1"/>
</dbReference>
<dbReference type="InterPro" id="IPR006935">
    <property type="entry name" value="Helicase/UvrB_N"/>
</dbReference>
<dbReference type="InterPro" id="IPR014001">
    <property type="entry name" value="Helicase_ATP-bd"/>
</dbReference>
<dbReference type="InterPro" id="IPR001650">
    <property type="entry name" value="Helicase_C-like"/>
</dbReference>
<dbReference type="InterPro" id="IPR027417">
    <property type="entry name" value="P-loop_NTPase"/>
</dbReference>
<dbReference type="InterPro" id="IPR001943">
    <property type="entry name" value="UVR_dom"/>
</dbReference>
<dbReference type="InterPro" id="IPR036876">
    <property type="entry name" value="UVR_dom_sf"/>
</dbReference>
<dbReference type="InterPro" id="IPR004807">
    <property type="entry name" value="UvrB"/>
</dbReference>
<dbReference type="InterPro" id="IPR041471">
    <property type="entry name" value="UvrB_inter"/>
</dbReference>
<dbReference type="InterPro" id="IPR024759">
    <property type="entry name" value="UvrB_YAD/RRR_dom"/>
</dbReference>
<dbReference type="NCBIfam" id="NF003673">
    <property type="entry name" value="PRK05298.1"/>
    <property type="match status" value="1"/>
</dbReference>
<dbReference type="NCBIfam" id="TIGR00631">
    <property type="entry name" value="uvrb"/>
    <property type="match status" value="1"/>
</dbReference>
<dbReference type="PANTHER" id="PTHR24029">
    <property type="entry name" value="UVRABC SYSTEM PROTEIN B"/>
    <property type="match status" value="1"/>
</dbReference>
<dbReference type="PANTHER" id="PTHR24029:SF0">
    <property type="entry name" value="UVRABC SYSTEM PROTEIN B"/>
    <property type="match status" value="1"/>
</dbReference>
<dbReference type="Pfam" id="PF00271">
    <property type="entry name" value="Helicase_C"/>
    <property type="match status" value="1"/>
</dbReference>
<dbReference type="Pfam" id="PF04851">
    <property type="entry name" value="ResIII"/>
    <property type="match status" value="1"/>
</dbReference>
<dbReference type="Pfam" id="PF02151">
    <property type="entry name" value="UVR"/>
    <property type="match status" value="1"/>
</dbReference>
<dbReference type="Pfam" id="PF12344">
    <property type="entry name" value="UvrB"/>
    <property type="match status" value="1"/>
</dbReference>
<dbReference type="Pfam" id="PF17757">
    <property type="entry name" value="UvrB_inter"/>
    <property type="match status" value="1"/>
</dbReference>
<dbReference type="SMART" id="SM00487">
    <property type="entry name" value="DEXDc"/>
    <property type="match status" value="1"/>
</dbReference>
<dbReference type="SMART" id="SM00490">
    <property type="entry name" value="HELICc"/>
    <property type="match status" value="1"/>
</dbReference>
<dbReference type="SUPFAM" id="SSF46600">
    <property type="entry name" value="C-terminal UvrC-binding domain of UvrB"/>
    <property type="match status" value="1"/>
</dbReference>
<dbReference type="SUPFAM" id="SSF52540">
    <property type="entry name" value="P-loop containing nucleoside triphosphate hydrolases"/>
    <property type="match status" value="2"/>
</dbReference>
<dbReference type="PROSITE" id="PS51192">
    <property type="entry name" value="HELICASE_ATP_BIND_1"/>
    <property type="match status" value="1"/>
</dbReference>
<dbReference type="PROSITE" id="PS51194">
    <property type="entry name" value="HELICASE_CTER"/>
    <property type="match status" value="1"/>
</dbReference>
<dbReference type="PROSITE" id="PS50151">
    <property type="entry name" value="UVR"/>
    <property type="match status" value="1"/>
</dbReference>
<reference key="1">
    <citation type="submission" date="2008-10" db="EMBL/GenBank/DDBJ databases">
        <title>Genome sequence of Clostridium botulinum A2 Kyoto.</title>
        <authorList>
            <person name="Shrivastava S."/>
            <person name="Brinkac L.M."/>
            <person name="Brown J.L."/>
            <person name="Bruce D."/>
            <person name="Detter C.C."/>
            <person name="Johnson E.A."/>
            <person name="Munk C.A."/>
            <person name="Smith L.A."/>
            <person name="Smith T.J."/>
            <person name="Sutton G."/>
            <person name="Brettin T.S."/>
        </authorList>
    </citation>
    <scope>NUCLEOTIDE SEQUENCE [LARGE SCALE GENOMIC DNA]</scope>
    <source>
        <strain>Kyoto / Type A2</strain>
    </source>
</reference>